<evidence type="ECO:0000269" key="1">
    <source>
    </source>
</evidence>
<evidence type="ECO:0000269" key="2">
    <source>
    </source>
</evidence>
<evidence type="ECO:0000269" key="3">
    <source>
    </source>
</evidence>
<evidence type="ECO:0000269" key="4">
    <source>
    </source>
</evidence>
<evidence type="ECO:0000303" key="5">
    <source>
    </source>
</evidence>
<evidence type="ECO:0000305" key="6"/>
<evidence type="ECO:0007744" key="7">
    <source>
        <dbReference type="PDB" id="3HP0"/>
    </source>
</evidence>
<evidence type="ECO:0007829" key="8">
    <source>
        <dbReference type="PDB" id="3HP0"/>
    </source>
</evidence>
<comment type="function">
    <text evidence="1 3 4">Involved in some intermediate steps for the synthesis of the antibiotic polyketide bacillaene which is involved in secondary metabolism (PubMed:17234808). Catalyzes the dehydration of the (S)-3-hydroxy-3-methylglutaryl group tethered to PksL to a 3-methylglutaconyl moiety (PubMed:16757561, PubMed:17234808, PubMed:32948786).</text>
</comment>
<comment type="pathway">
    <text evidence="3">Antibiotic biosynthesis; bacillaene biosynthesis.</text>
</comment>
<comment type="subcellular location">
    <subcellularLocation>
        <location evidence="2">Cytoplasm</location>
    </subcellularLocation>
</comment>
<comment type="similarity">
    <text evidence="6">Belongs to the enoyl-CoA hydratase/isomerase family.</text>
</comment>
<keyword id="KW-0002">3D-structure</keyword>
<keyword id="KW-0045">Antibiotic biosynthesis</keyword>
<keyword id="KW-0963">Cytoplasm</keyword>
<keyword id="KW-0456">Lyase</keyword>
<keyword id="KW-1185">Reference proteome</keyword>
<feature type="chain" id="PRO_0000109346" description="Bacillaene synthase dehydratase PksH">
    <location>
        <begin position="1"/>
        <end position="259"/>
    </location>
</feature>
<feature type="active site" evidence="4 7">
    <location>
        <position position="68"/>
    </location>
</feature>
<feature type="active site" evidence="4 7">
    <location>
        <position position="137"/>
    </location>
</feature>
<feature type="mutagenesis site" description="Reduces the enzymatic activity." evidence="4">
    <original>D</original>
    <variation>A</variation>
    <location>
        <position position="68"/>
    </location>
</feature>
<feature type="mutagenesis site" description="Abolishes the enzymatic activity." evidence="4">
    <original>E</original>
    <variation>A</variation>
    <location>
        <position position="137"/>
    </location>
</feature>
<feature type="strand" evidence="8">
    <location>
        <begin position="7"/>
        <end position="14"/>
    </location>
</feature>
<feature type="strand" evidence="8">
    <location>
        <begin position="17"/>
        <end position="22"/>
    </location>
</feature>
<feature type="helix" evidence="8">
    <location>
        <begin position="25"/>
        <end position="27"/>
    </location>
</feature>
<feature type="helix" evidence="8">
    <location>
        <begin position="34"/>
        <end position="48"/>
    </location>
</feature>
<feature type="strand" evidence="8">
    <location>
        <begin position="53"/>
        <end position="57"/>
    </location>
</feature>
<feature type="helix" evidence="8">
    <location>
        <begin position="69"/>
        <end position="74"/>
    </location>
</feature>
<feature type="turn" evidence="8">
    <location>
        <begin position="75"/>
        <end position="79"/>
    </location>
</feature>
<feature type="helix" evidence="8">
    <location>
        <begin position="87"/>
        <end position="98"/>
    </location>
</feature>
<feature type="strand" evidence="8">
    <location>
        <begin position="99"/>
        <end position="107"/>
    </location>
</feature>
<feature type="strand" evidence="8">
    <location>
        <begin position="109"/>
        <end position="112"/>
    </location>
</feature>
<feature type="helix" evidence="8">
    <location>
        <begin position="115"/>
        <end position="121"/>
    </location>
</feature>
<feature type="strand" evidence="8">
    <location>
        <begin position="122"/>
        <end position="127"/>
    </location>
</feature>
<feature type="strand" evidence="8">
    <location>
        <begin position="132"/>
        <end position="134"/>
    </location>
</feature>
<feature type="helix" evidence="8">
    <location>
        <begin position="137"/>
        <end position="140"/>
    </location>
</feature>
<feature type="turn" evidence="8">
    <location>
        <begin position="145"/>
        <end position="147"/>
    </location>
</feature>
<feature type="helix" evidence="8">
    <location>
        <begin position="148"/>
        <end position="155"/>
    </location>
</feature>
<feature type="helix" evidence="8">
    <location>
        <begin position="157"/>
        <end position="166"/>
    </location>
</feature>
<feature type="helix" evidence="8">
    <location>
        <begin position="172"/>
        <end position="178"/>
    </location>
</feature>
<feature type="strand" evidence="8">
    <location>
        <begin position="180"/>
        <end position="182"/>
    </location>
</feature>
<feature type="helix" evidence="8">
    <location>
        <begin position="190"/>
        <end position="199"/>
    </location>
</feature>
<feature type="helix" evidence="8">
    <location>
        <begin position="204"/>
        <end position="217"/>
    </location>
</feature>
<feature type="helix" evidence="8">
    <location>
        <begin position="220"/>
        <end position="235"/>
    </location>
</feature>
<feature type="helix" evidence="8">
    <location>
        <begin position="241"/>
        <end position="248"/>
    </location>
</feature>
<protein>
    <recommendedName>
        <fullName evidence="5">Bacillaene synthase dehydratase PksH</fullName>
        <ecNumber>4.2.1.-</ecNumber>
    </recommendedName>
    <alternativeName>
        <fullName evidence="6">Polyketide biosynthesis enoyl-CoA hydratase</fullName>
    </alternativeName>
</protein>
<reference key="1">
    <citation type="journal article" date="1995" name="Microbiology">
        <title>Sequence around the 159 degree region of the Bacillus subtilis genome: the pksX locus spans 33.6 kb.</title>
        <authorList>
            <person name="Albertini A.M."/>
            <person name="Caramori T."/>
            <person name="Scoffone F."/>
            <person name="Scotti C."/>
            <person name="Galizzi A."/>
        </authorList>
    </citation>
    <scope>NUCLEOTIDE SEQUENCE [GENOMIC DNA]</scope>
    <source>
        <strain>168 / PB1424</strain>
    </source>
</reference>
<reference key="2">
    <citation type="journal article" date="1997" name="Nature">
        <title>The complete genome sequence of the Gram-positive bacterium Bacillus subtilis.</title>
        <authorList>
            <person name="Kunst F."/>
            <person name="Ogasawara N."/>
            <person name="Moszer I."/>
            <person name="Albertini A.M."/>
            <person name="Alloni G."/>
            <person name="Azevedo V."/>
            <person name="Bertero M.G."/>
            <person name="Bessieres P."/>
            <person name="Bolotin A."/>
            <person name="Borchert S."/>
            <person name="Borriss R."/>
            <person name="Boursier L."/>
            <person name="Brans A."/>
            <person name="Braun M."/>
            <person name="Brignell S.C."/>
            <person name="Bron S."/>
            <person name="Brouillet S."/>
            <person name="Bruschi C.V."/>
            <person name="Caldwell B."/>
            <person name="Capuano V."/>
            <person name="Carter N.M."/>
            <person name="Choi S.-K."/>
            <person name="Codani J.-J."/>
            <person name="Connerton I.F."/>
            <person name="Cummings N.J."/>
            <person name="Daniel R.A."/>
            <person name="Denizot F."/>
            <person name="Devine K.M."/>
            <person name="Duesterhoeft A."/>
            <person name="Ehrlich S.D."/>
            <person name="Emmerson P.T."/>
            <person name="Entian K.-D."/>
            <person name="Errington J."/>
            <person name="Fabret C."/>
            <person name="Ferrari E."/>
            <person name="Foulger D."/>
            <person name="Fritz C."/>
            <person name="Fujita M."/>
            <person name="Fujita Y."/>
            <person name="Fuma S."/>
            <person name="Galizzi A."/>
            <person name="Galleron N."/>
            <person name="Ghim S.-Y."/>
            <person name="Glaser P."/>
            <person name="Goffeau A."/>
            <person name="Golightly E.J."/>
            <person name="Grandi G."/>
            <person name="Guiseppi G."/>
            <person name="Guy B.J."/>
            <person name="Haga K."/>
            <person name="Haiech J."/>
            <person name="Harwood C.R."/>
            <person name="Henaut A."/>
            <person name="Hilbert H."/>
            <person name="Holsappel S."/>
            <person name="Hosono S."/>
            <person name="Hullo M.-F."/>
            <person name="Itaya M."/>
            <person name="Jones L.-M."/>
            <person name="Joris B."/>
            <person name="Karamata D."/>
            <person name="Kasahara Y."/>
            <person name="Klaerr-Blanchard M."/>
            <person name="Klein C."/>
            <person name="Kobayashi Y."/>
            <person name="Koetter P."/>
            <person name="Koningstein G."/>
            <person name="Krogh S."/>
            <person name="Kumano M."/>
            <person name="Kurita K."/>
            <person name="Lapidus A."/>
            <person name="Lardinois S."/>
            <person name="Lauber J."/>
            <person name="Lazarevic V."/>
            <person name="Lee S.-M."/>
            <person name="Levine A."/>
            <person name="Liu H."/>
            <person name="Masuda S."/>
            <person name="Mauel C."/>
            <person name="Medigue C."/>
            <person name="Medina N."/>
            <person name="Mellado R.P."/>
            <person name="Mizuno M."/>
            <person name="Moestl D."/>
            <person name="Nakai S."/>
            <person name="Noback M."/>
            <person name="Noone D."/>
            <person name="O'Reilly M."/>
            <person name="Ogawa K."/>
            <person name="Ogiwara A."/>
            <person name="Oudega B."/>
            <person name="Park S.-H."/>
            <person name="Parro V."/>
            <person name="Pohl T.M."/>
            <person name="Portetelle D."/>
            <person name="Porwollik S."/>
            <person name="Prescott A.M."/>
            <person name="Presecan E."/>
            <person name="Pujic P."/>
            <person name="Purnelle B."/>
            <person name="Rapoport G."/>
            <person name="Rey M."/>
            <person name="Reynolds S."/>
            <person name="Rieger M."/>
            <person name="Rivolta C."/>
            <person name="Rocha E."/>
            <person name="Roche B."/>
            <person name="Rose M."/>
            <person name="Sadaie Y."/>
            <person name="Sato T."/>
            <person name="Scanlan E."/>
            <person name="Schleich S."/>
            <person name="Schroeter R."/>
            <person name="Scoffone F."/>
            <person name="Sekiguchi J."/>
            <person name="Sekowska A."/>
            <person name="Seror S.J."/>
            <person name="Serror P."/>
            <person name="Shin B.-S."/>
            <person name="Soldo B."/>
            <person name="Sorokin A."/>
            <person name="Tacconi E."/>
            <person name="Takagi T."/>
            <person name="Takahashi H."/>
            <person name="Takemaru K."/>
            <person name="Takeuchi M."/>
            <person name="Tamakoshi A."/>
            <person name="Tanaka T."/>
            <person name="Terpstra P."/>
            <person name="Tognoni A."/>
            <person name="Tosato V."/>
            <person name="Uchiyama S."/>
            <person name="Vandenbol M."/>
            <person name="Vannier F."/>
            <person name="Vassarotti A."/>
            <person name="Viari A."/>
            <person name="Wambutt R."/>
            <person name="Wedler E."/>
            <person name="Wedler H."/>
            <person name="Weitzenegger T."/>
            <person name="Winters P."/>
            <person name="Wipat A."/>
            <person name="Yamamoto H."/>
            <person name="Yamane K."/>
            <person name="Yasumoto K."/>
            <person name="Yata K."/>
            <person name="Yoshida K."/>
            <person name="Yoshikawa H.-F."/>
            <person name="Zumstein E."/>
            <person name="Yoshikawa H."/>
            <person name="Danchin A."/>
        </authorList>
    </citation>
    <scope>NUCLEOTIDE SEQUENCE [LARGE SCALE GENOMIC DNA]</scope>
    <source>
        <strain>168</strain>
    </source>
</reference>
<reference key="3">
    <citation type="journal article" date="2006" name="Proc. Natl. Acad. Sci. U.S.A.">
        <title>Convergence of isoprene and polyketide biosynthetic machinery: isoprenyl-S-carrier proteins in the pksX pathway of Bacillus subtilis.</title>
        <authorList>
            <person name="Calderone C.T."/>
            <person name="Kowtoniuk W.E."/>
            <person name="Kelleher N.L."/>
            <person name="Walsh C.T."/>
            <person name="Dorrestein P.C."/>
        </authorList>
    </citation>
    <scope>FUNCTION</scope>
</reference>
<reference key="4">
    <citation type="journal article" date="2007" name="Proc. Natl. Acad. Sci. U.S.A.">
        <title>A singular enzymatic megacomplex from Bacillus subtilis.</title>
        <authorList>
            <person name="Straight P.D."/>
            <person name="Fischbach M.A."/>
            <person name="Walsh C.T."/>
            <person name="Rudner D.Z."/>
            <person name="Kolter R."/>
        </authorList>
    </citation>
    <scope>SUBCELLULAR LOCATION</scope>
    <source>
        <strain>168 / Marburg / ATCC 6051 / DSM 10 / JCM 1465 / NBRC 13719 / NCIMB 3610 / NRRL NRS-744 / VKM B-501</strain>
    </source>
</reference>
<reference key="5">
    <citation type="journal article" date="2007" name="Proc. Natl. Acad. Sci. U.S.A.">
        <title>The identification of bacillaene, the product of the PksX megacomplex in Bacillus subtilis.</title>
        <authorList>
            <person name="Butcher R.A."/>
            <person name="Schroeder F.C."/>
            <person name="Fischbach M.A."/>
            <person name="Straight P.D."/>
            <person name="Kolter R."/>
            <person name="Walsh C.T."/>
            <person name="Clardy J."/>
        </authorList>
    </citation>
    <scope>FUNCTION</scope>
    <scope>PATHWAY</scope>
    <source>
        <strain>168 / Marburg / ATCC 6051 / DSM 10 / JCM 1465 / NBRC 13719 / NCIMB 3610 / NRRL NRS-744 / VKM B-501</strain>
    </source>
</reference>
<reference key="6">
    <citation type="journal article" date="2020" name="Sci. Rep.">
        <title>Structure and mechanism of a dehydratase/decarboxylase enzyme couple involved in polyketide beta-methyl branch incorporation.</title>
        <authorList>
            <person name="Nair A.V."/>
            <person name="Robson A."/>
            <person name="Ackrill T.D."/>
            <person name="Till M."/>
            <person name="Byrne M.J."/>
            <person name="Back C.R."/>
            <person name="Tiwari K."/>
            <person name="Davies J.A."/>
            <person name="Willis C.L."/>
            <person name="Race P.R."/>
        </authorList>
    </citation>
    <scope>FUNCTION</scope>
    <scope>SUBUNIT</scope>
    <scope>ACTIVE SITE</scope>
    <scope>MUTAGENESIS OF ASP-68 AND GLU-137</scope>
</reference>
<reference key="7">
    <citation type="submission" date="2009-06" db="PDB data bank">
        <title>Crystal structure of a putative polyketide biosynthesis enoyl-COA hydratase (pksH) from Bacillus subtilis.</title>
        <authorList>
            <consortium name="New York structural genomics research consortium (NYSGRC)"/>
        </authorList>
    </citation>
    <scope>X-RAY CRYSTALLOGRAPHY (2.32 ANGSTROMS) OF 3-259</scope>
</reference>
<accession>P40805</accession>
<gene>
    <name type="primary">pksH</name>
    <name type="ordered locus">BSU17160</name>
</gene>
<dbReference type="EC" id="4.2.1.-"/>
<dbReference type="EMBL" id="U11039">
    <property type="protein sequence ID" value="AAA85141.1"/>
    <property type="molecule type" value="Genomic_DNA"/>
</dbReference>
<dbReference type="EMBL" id="AL009126">
    <property type="protein sequence ID" value="CAB13587.1"/>
    <property type="molecule type" value="Genomic_DNA"/>
</dbReference>
<dbReference type="PIR" id="F69678">
    <property type="entry name" value="F69678"/>
</dbReference>
<dbReference type="RefSeq" id="NP_389596.1">
    <property type="nucleotide sequence ID" value="NC_000964.3"/>
</dbReference>
<dbReference type="RefSeq" id="WP_010886512.1">
    <property type="nucleotide sequence ID" value="NZ_OZ025638.1"/>
</dbReference>
<dbReference type="PDB" id="3HP0">
    <property type="method" value="X-ray"/>
    <property type="resolution" value="2.32 A"/>
    <property type="chains" value="A/B/C/D/E/F=3-259"/>
</dbReference>
<dbReference type="PDBsum" id="3HP0"/>
<dbReference type="SMR" id="P40805"/>
<dbReference type="FunCoup" id="P40805">
    <property type="interactions" value="18"/>
</dbReference>
<dbReference type="STRING" id="224308.BSU17160"/>
<dbReference type="PaxDb" id="224308-BSU17160"/>
<dbReference type="EnsemblBacteria" id="CAB13587">
    <property type="protein sequence ID" value="CAB13587"/>
    <property type="gene ID" value="BSU_17160"/>
</dbReference>
<dbReference type="GeneID" id="940033"/>
<dbReference type="KEGG" id="bsu:BSU17160"/>
<dbReference type="PATRIC" id="fig|224308.43.peg.1812"/>
<dbReference type="eggNOG" id="COG1024">
    <property type="taxonomic scope" value="Bacteria"/>
</dbReference>
<dbReference type="InParanoid" id="P40805"/>
<dbReference type="OrthoDB" id="9775794at2"/>
<dbReference type="PhylomeDB" id="P40805"/>
<dbReference type="BioCyc" id="BSUB:BSU17160-MONOMER"/>
<dbReference type="UniPathway" id="UPA01003"/>
<dbReference type="EvolutionaryTrace" id="P40805"/>
<dbReference type="Proteomes" id="UP000001570">
    <property type="component" value="Chromosome"/>
</dbReference>
<dbReference type="GO" id="GO:0005737">
    <property type="term" value="C:cytoplasm"/>
    <property type="evidence" value="ECO:0007669"/>
    <property type="project" value="UniProtKB-SubCell"/>
</dbReference>
<dbReference type="GO" id="GO:0016829">
    <property type="term" value="F:lyase activity"/>
    <property type="evidence" value="ECO:0007669"/>
    <property type="project" value="UniProtKB-KW"/>
</dbReference>
<dbReference type="GO" id="GO:0017000">
    <property type="term" value="P:antibiotic biosynthetic process"/>
    <property type="evidence" value="ECO:0007669"/>
    <property type="project" value="UniProtKB-KW"/>
</dbReference>
<dbReference type="CDD" id="cd06558">
    <property type="entry name" value="crotonase-like"/>
    <property type="match status" value="1"/>
</dbReference>
<dbReference type="Gene3D" id="3.90.226.10">
    <property type="entry name" value="2-enoyl-CoA Hydratase, Chain A, domain 1"/>
    <property type="match status" value="1"/>
</dbReference>
<dbReference type="InterPro" id="IPR029045">
    <property type="entry name" value="ClpP/crotonase-like_dom_sf"/>
</dbReference>
<dbReference type="InterPro" id="IPR018376">
    <property type="entry name" value="Enoyl-CoA_hyd/isom_CS"/>
</dbReference>
<dbReference type="InterPro" id="IPR001753">
    <property type="entry name" value="Enoyl-CoA_hydra/iso"/>
</dbReference>
<dbReference type="InterPro" id="IPR051683">
    <property type="entry name" value="Enoyl-CoA_Hydratase/Isomerase"/>
</dbReference>
<dbReference type="NCBIfam" id="NF005498">
    <property type="entry name" value="PRK07112.1"/>
    <property type="match status" value="1"/>
</dbReference>
<dbReference type="PANTHER" id="PTHR42964">
    <property type="entry name" value="ENOYL-COA HYDRATASE"/>
    <property type="match status" value="1"/>
</dbReference>
<dbReference type="PANTHER" id="PTHR42964:SF1">
    <property type="entry name" value="POLYKETIDE BIOSYNTHESIS ENOYL-COA HYDRATASE PKSH-RELATED"/>
    <property type="match status" value="1"/>
</dbReference>
<dbReference type="Pfam" id="PF00378">
    <property type="entry name" value="ECH_1"/>
    <property type="match status" value="1"/>
</dbReference>
<dbReference type="SUPFAM" id="SSF52096">
    <property type="entry name" value="ClpP/crotonase"/>
    <property type="match status" value="1"/>
</dbReference>
<dbReference type="PROSITE" id="PS00166">
    <property type="entry name" value="ENOYL_COA_HYDRATASE"/>
    <property type="match status" value="1"/>
</dbReference>
<name>PKSH_BACSU</name>
<organism>
    <name type="scientific">Bacillus subtilis (strain 168)</name>
    <dbReference type="NCBI Taxonomy" id="224308"/>
    <lineage>
        <taxon>Bacteria</taxon>
        <taxon>Bacillati</taxon>
        <taxon>Bacillota</taxon>
        <taxon>Bacilli</taxon>
        <taxon>Bacillales</taxon>
        <taxon>Bacillaceae</taxon>
        <taxon>Bacillus</taxon>
    </lineage>
</organism>
<proteinExistence type="evidence at protein level"/>
<sequence>MDLVTYQTIKVRFQASVCYITFHRPEANNTINDTLIEECLQVLNQCETSTVTVVVLEGLPEVFCFGADFQEIYQEMKRGRKQASSQEPLYDLWMKLQTGPYVTISHVRGKVNAGGLGFVSATDIAIADQTASFSLSELLFGLYPACVLPFLIRRIGRQKAHYMTLMTKPISVQEASEWGLIDAFDAESDVLLRKHLLRLRRLNKKGIAHYKQFMSSLDHQVSRAKATALTANQDMFSDPQNQMGIIRYVETGQFPWEDQ</sequence>